<protein>
    <recommendedName>
        <fullName evidence="1">Probable alpha-L-glutamate ligase 2</fullName>
        <ecNumber evidence="1">6.3.2.-</ecNumber>
    </recommendedName>
</protein>
<dbReference type="EC" id="6.3.2.-" evidence="1"/>
<dbReference type="EMBL" id="CP000681">
    <property type="protein sequence ID" value="ABP77039.1"/>
    <property type="molecule type" value="Genomic_DNA"/>
</dbReference>
<dbReference type="SMR" id="A4YAQ6"/>
<dbReference type="STRING" id="319224.Sputcn32_3327"/>
<dbReference type="KEGG" id="spc:Sputcn32_3327"/>
<dbReference type="eggNOG" id="COG0189">
    <property type="taxonomic scope" value="Bacteria"/>
</dbReference>
<dbReference type="HOGENOM" id="CLU_054353_0_1_6"/>
<dbReference type="GO" id="GO:0005737">
    <property type="term" value="C:cytoplasm"/>
    <property type="evidence" value="ECO:0007669"/>
    <property type="project" value="TreeGrafter"/>
</dbReference>
<dbReference type="GO" id="GO:0005524">
    <property type="term" value="F:ATP binding"/>
    <property type="evidence" value="ECO:0007669"/>
    <property type="project" value="UniProtKB-UniRule"/>
</dbReference>
<dbReference type="GO" id="GO:0046872">
    <property type="term" value="F:metal ion binding"/>
    <property type="evidence" value="ECO:0007669"/>
    <property type="project" value="UniProtKB-KW"/>
</dbReference>
<dbReference type="GO" id="GO:0018169">
    <property type="term" value="F:ribosomal S6-glutamic acid ligase activity"/>
    <property type="evidence" value="ECO:0007669"/>
    <property type="project" value="TreeGrafter"/>
</dbReference>
<dbReference type="GO" id="GO:0036211">
    <property type="term" value="P:protein modification process"/>
    <property type="evidence" value="ECO:0007669"/>
    <property type="project" value="InterPro"/>
</dbReference>
<dbReference type="GO" id="GO:0009432">
    <property type="term" value="P:SOS response"/>
    <property type="evidence" value="ECO:0007669"/>
    <property type="project" value="TreeGrafter"/>
</dbReference>
<dbReference type="GO" id="GO:0006412">
    <property type="term" value="P:translation"/>
    <property type="evidence" value="ECO:0007669"/>
    <property type="project" value="UniProtKB-KW"/>
</dbReference>
<dbReference type="FunFam" id="3.40.50.20:FF:000004">
    <property type="entry name" value="Probable alpha-L-glutamate ligase"/>
    <property type="match status" value="1"/>
</dbReference>
<dbReference type="FunFam" id="3.30.1490.20:FF:000005">
    <property type="entry name" value="Probable alpha-L-glutamate ligase 1"/>
    <property type="match status" value="1"/>
</dbReference>
<dbReference type="Gene3D" id="3.40.50.20">
    <property type="match status" value="1"/>
</dbReference>
<dbReference type="Gene3D" id="3.30.1490.20">
    <property type="entry name" value="ATP-grasp fold, A domain"/>
    <property type="match status" value="1"/>
</dbReference>
<dbReference type="Gene3D" id="3.30.470.20">
    <property type="entry name" value="ATP-grasp fold, B domain"/>
    <property type="match status" value="1"/>
</dbReference>
<dbReference type="HAMAP" id="MF_01552">
    <property type="entry name" value="RimK"/>
    <property type="match status" value="1"/>
</dbReference>
<dbReference type="InterPro" id="IPR011761">
    <property type="entry name" value="ATP-grasp"/>
</dbReference>
<dbReference type="InterPro" id="IPR013651">
    <property type="entry name" value="ATP-grasp_RimK-type"/>
</dbReference>
<dbReference type="InterPro" id="IPR013815">
    <property type="entry name" value="ATP_grasp_subdomain_1"/>
</dbReference>
<dbReference type="InterPro" id="IPR023533">
    <property type="entry name" value="RimK"/>
</dbReference>
<dbReference type="InterPro" id="IPR041107">
    <property type="entry name" value="Rimk_N"/>
</dbReference>
<dbReference type="InterPro" id="IPR004666">
    <property type="entry name" value="Rp_bS6_RimK/Lys_biosynth_LsyX"/>
</dbReference>
<dbReference type="NCBIfam" id="NF007764">
    <property type="entry name" value="PRK10446.1"/>
    <property type="match status" value="1"/>
</dbReference>
<dbReference type="NCBIfam" id="TIGR00768">
    <property type="entry name" value="rimK_fam"/>
    <property type="match status" value="1"/>
</dbReference>
<dbReference type="PANTHER" id="PTHR21621:SF7">
    <property type="entry name" value="RIBOSOMAL PROTEIN BS6--L-GLUTAMATE LIGASE"/>
    <property type="match status" value="1"/>
</dbReference>
<dbReference type="PANTHER" id="PTHR21621">
    <property type="entry name" value="RIBOSOMAL PROTEIN S6 MODIFICATION PROTEIN"/>
    <property type="match status" value="1"/>
</dbReference>
<dbReference type="Pfam" id="PF08443">
    <property type="entry name" value="RimK"/>
    <property type="match status" value="1"/>
</dbReference>
<dbReference type="Pfam" id="PF18030">
    <property type="entry name" value="Rimk_N"/>
    <property type="match status" value="1"/>
</dbReference>
<dbReference type="SUPFAM" id="SSF56059">
    <property type="entry name" value="Glutathione synthetase ATP-binding domain-like"/>
    <property type="match status" value="1"/>
</dbReference>
<dbReference type="PROSITE" id="PS50975">
    <property type="entry name" value="ATP_GRASP"/>
    <property type="match status" value="1"/>
</dbReference>
<gene>
    <name evidence="1" type="primary">rimK2</name>
    <name type="ordered locus">Sputcn32_3327</name>
</gene>
<keyword id="KW-0067">ATP-binding</keyword>
<keyword id="KW-0436">Ligase</keyword>
<keyword id="KW-0460">Magnesium</keyword>
<keyword id="KW-0464">Manganese</keyword>
<keyword id="KW-0479">Metal-binding</keyword>
<keyword id="KW-0547">Nucleotide-binding</keyword>
<keyword id="KW-0648">Protein biosynthesis</keyword>
<organism>
    <name type="scientific">Shewanella putrefaciens (strain CN-32 / ATCC BAA-453)</name>
    <dbReference type="NCBI Taxonomy" id="319224"/>
    <lineage>
        <taxon>Bacteria</taxon>
        <taxon>Pseudomonadati</taxon>
        <taxon>Pseudomonadota</taxon>
        <taxon>Gammaproteobacteria</taxon>
        <taxon>Alteromonadales</taxon>
        <taxon>Shewanellaceae</taxon>
        <taxon>Shewanella</taxon>
    </lineage>
</organism>
<comment type="cofactor">
    <cofactor evidence="1">
        <name>Mg(2+)</name>
        <dbReference type="ChEBI" id="CHEBI:18420"/>
    </cofactor>
    <cofactor evidence="1">
        <name>Mn(2+)</name>
        <dbReference type="ChEBI" id="CHEBI:29035"/>
    </cofactor>
    <text evidence="1">Binds 2 magnesium or manganese ions per subunit.</text>
</comment>
<comment type="similarity">
    <text evidence="1">Belongs to the RimK family.</text>
</comment>
<evidence type="ECO:0000255" key="1">
    <source>
        <dbReference type="HAMAP-Rule" id="MF_01552"/>
    </source>
</evidence>
<reference key="1">
    <citation type="submission" date="2007-04" db="EMBL/GenBank/DDBJ databases">
        <title>Complete sequence of Shewanella putrefaciens CN-32.</title>
        <authorList>
            <consortium name="US DOE Joint Genome Institute"/>
            <person name="Copeland A."/>
            <person name="Lucas S."/>
            <person name="Lapidus A."/>
            <person name="Barry K."/>
            <person name="Detter J.C."/>
            <person name="Glavina del Rio T."/>
            <person name="Hammon N."/>
            <person name="Israni S."/>
            <person name="Dalin E."/>
            <person name="Tice H."/>
            <person name="Pitluck S."/>
            <person name="Chain P."/>
            <person name="Malfatti S."/>
            <person name="Shin M."/>
            <person name="Vergez L."/>
            <person name="Schmutz J."/>
            <person name="Larimer F."/>
            <person name="Land M."/>
            <person name="Hauser L."/>
            <person name="Kyrpides N."/>
            <person name="Mikhailova N."/>
            <person name="Romine M.F."/>
            <person name="Fredrickson J."/>
            <person name="Tiedje J."/>
            <person name="Richardson P."/>
        </authorList>
    </citation>
    <scope>NUCLEOTIDE SEQUENCE [LARGE SCALE GENOMIC DNA]</scope>
    <source>
        <strain>CN-32 / ATCC BAA-453</strain>
    </source>
</reference>
<accession>A4YAQ6</accession>
<proteinExistence type="inferred from homology"/>
<sequence>MKIGILSQFPQLYSTQRLVAACESRGHEAVVINTLNCYMNINSIKPSIHYEGQELVGFDAIIPRIHASVTFYGCAVVRQFEMMGVFVANDSISIARSRDKLRALQLLSRKGIGMPITGFANKPNDIPDLINMVGGAPLVIKLLEGTQGIGVVLAETKTAAESVIEAFLGLKANILVQEYIKESNGSDIRCFVVGDKVVASMKRQGPEGDFRSNLHLGGCGETVKITSVERKMAIAAVKAMGLVVAGVDILRSNRGPLILEVNSAPGIEGIEQTTGISVTEPIVEYIEKMVAARKTNRPIIA</sequence>
<feature type="chain" id="PRO_0000340559" description="Probable alpha-L-glutamate ligase 2">
    <location>
        <begin position="1"/>
        <end position="301"/>
    </location>
</feature>
<feature type="domain" description="ATP-grasp" evidence="1">
    <location>
        <begin position="104"/>
        <end position="287"/>
    </location>
</feature>
<feature type="binding site" evidence="1">
    <location>
        <position position="141"/>
    </location>
    <ligand>
        <name>ATP</name>
        <dbReference type="ChEBI" id="CHEBI:30616"/>
    </ligand>
</feature>
<feature type="binding site" evidence="1">
    <location>
        <begin position="178"/>
        <end position="179"/>
    </location>
    <ligand>
        <name>ATP</name>
        <dbReference type="ChEBI" id="CHEBI:30616"/>
    </ligand>
</feature>
<feature type="binding site" evidence="1">
    <location>
        <position position="187"/>
    </location>
    <ligand>
        <name>ATP</name>
        <dbReference type="ChEBI" id="CHEBI:30616"/>
    </ligand>
</feature>
<feature type="binding site" evidence="1">
    <location>
        <begin position="211"/>
        <end position="213"/>
    </location>
    <ligand>
        <name>ATP</name>
        <dbReference type="ChEBI" id="CHEBI:30616"/>
    </ligand>
</feature>
<feature type="binding site" evidence="1">
    <location>
        <position position="248"/>
    </location>
    <ligand>
        <name>Mg(2+)</name>
        <dbReference type="ChEBI" id="CHEBI:18420"/>
        <label>1</label>
    </ligand>
</feature>
<feature type="binding site" evidence="1">
    <location>
        <position position="248"/>
    </location>
    <ligand>
        <name>Mn(2+)</name>
        <dbReference type="ChEBI" id="CHEBI:29035"/>
        <label>1</label>
    </ligand>
</feature>
<feature type="binding site" evidence="1">
    <location>
        <position position="260"/>
    </location>
    <ligand>
        <name>Mg(2+)</name>
        <dbReference type="ChEBI" id="CHEBI:18420"/>
        <label>1</label>
    </ligand>
</feature>
<feature type="binding site" evidence="1">
    <location>
        <position position="260"/>
    </location>
    <ligand>
        <name>Mg(2+)</name>
        <dbReference type="ChEBI" id="CHEBI:18420"/>
        <label>2</label>
    </ligand>
</feature>
<feature type="binding site" evidence="1">
    <location>
        <position position="260"/>
    </location>
    <ligand>
        <name>Mn(2+)</name>
        <dbReference type="ChEBI" id="CHEBI:29035"/>
        <label>1</label>
    </ligand>
</feature>
<feature type="binding site" evidence="1">
    <location>
        <position position="260"/>
    </location>
    <ligand>
        <name>Mn(2+)</name>
        <dbReference type="ChEBI" id="CHEBI:29035"/>
        <label>2</label>
    </ligand>
</feature>
<feature type="binding site" evidence="1">
    <location>
        <position position="262"/>
    </location>
    <ligand>
        <name>Mg(2+)</name>
        <dbReference type="ChEBI" id="CHEBI:18420"/>
        <label>2</label>
    </ligand>
</feature>
<feature type="binding site" evidence="1">
    <location>
        <position position="262"/>
    </location>
    <ligand>
        <name>Mn(2+)</name>
        <dbReference type="ChEBI" id="CHEBI:29035"/>
        <label>2</label>
    </ligand>
</feature>
<name>RIMK2_SHEPC</name>